<evidence type="ECO:0000255" key="1">
    <source>
        <dbReference type="HAMAP-Rule" id="MF_01217"/>
    </source>
</evidence>
<evidence type="ECO:0000255" key="2">
    <source>
        <dbReference type="PROSITE-ProRule" id="PRU00258"/>
    </source>
</evidence>
<evidence type="ECO:0000269" key="3">
    <source>
    </source>
</evidence>
<dbReference type="EMBL" id="CP000253">
    <property type="protein sequence ID" value="ABD30307.1"/>
    <property type="molecule type" value="Genomic_DNA"/>
</dbReference>
<dbReference type="RefSeq" id="WP_000426914.1">
    <property type="nucleotide sequence ID" value="NZ_LS483365.1"/>
</dbReference>
<dbReference type="RefSeq" id="YP_499739.1">
    <property type="nucleotide sequence ID" value="NC_007795.1"/>
</dbReference>
<dbReference type="SMR" id="Q2FZ51"/>
<dbReference type="STRING" id="93061.SAOUHSC_01201"/>
<dbReference type="PaxDb" id="1280-SAXN108_1232"/>
<dbReference type="GeneID" id="3919468"/>
<dbReference type="KEGG" id="sao:SAOUHSC_01201"/>
<dbReference type="PATRIC" id="fig|93061.5.peg.1102"/>
<dbReference type="eggNOG" id="COG0236">
    <property type="taxonomic scope" value="Bacteria"/>
</dbReference>
<dbReference type="HOGENOM" id="CLU_108696_5_1_9"/>
<dbReference type="OrthoDB" id="9804551at2"/>
<dbReference type="UniPathway" id="UPA00094"/>
<dbReference type="PRO" id="PR:Q2FZ51"/>
<dbReference type="Proteomes" id="UP000008816">
    <property type="component" value="Chromosome"/>
</dbReference>
<dbReference type="GO" id="GO:0005829">
    <property type="term" value="C:cytosol"/>
    <property type="evidence" value="ECO:0000318"/>
    <property type="project" value="GO_Central"/>
</dbReference>
<dbReference type="GO" id="GO:0016020">
    <property type="term" value="C:membrane"/>
    <property type="evidence" value="ECO:0007669"/>
    <property type="project" value="GOC"/>
</dbReference>
<dbReference type="GO" id="GO:0000035">
    <property type="term" value="F:acyl binding"/>
    <property type="evidence" value="ECO:0000318"/>
    <property type="project" value="GO_Central"/>
</dbReference>
<dbReference type="GO" id="GO:0000036">
    <property type="term" value="F:acyl carrier activity"/>
    <property type="evidence" value="ECO:0000318"/>
    <property type="project" value="GO_Central"/>
</dbReference>
<dbReference type="GO" id="GO:0009245">
    <property type="term" value="P:lipid A biosynthetic process"/>
    <property type="evidence" value="ECO:0000318"/>
    <property type="project" value="GO_Central"/>
</dbReference>
<dbReference type="FunFam" id="1.10.1200.10:FF:000001">
    <property type="entry name" value="Acyl carrier protein"/>
    <property type="match status" value="1"/>
</dbReference>
<dbReference type="Gene3D" id="1.10.1200.10">
    <property type="entry name" value="ACP-like"/>
    <property type="match status" value="1"/>
</dbReference>
<dbReference type="HAMAP" id="MF_01217">
    <property type="entry name" value="Acyl_carrier"/>
    <property type="match status" value="1"/>
</dbReference>
<dbReference type="InterPro" id="IPR003231">
    <property type="entry name" value="ACP"/>
</dbReference>
<dbReference type="InterPro" id="IPR036736">
    <property type="entry name" value="ACP-like_sf"/>
</dbReference>
<dbReference type="InterPro" id="IPR009081">
    <property type="entry name" value="PP-bd_ACP"/>
</dbReference>
<dbReference type="InterPro" id="IPR006162">
    <property type="entry name" value="Ppantetheine_attach_site"/>
</dbReference>
<dbReference type="NCBIfam" id="TIGR00517">
    <property type="entry name" value="acyl_carrier"/>
    <property type="match status" value="1"/>
</dbReference>
<dbReference type="NCBIfam" id="NF002148">
    <property type="entry name" value="PRK00982.1-2"/>
    <property type="match status" value="1"/>
</dbReference>
<dbReference type="NCBIfam" id="NF002150">
    <property type="entry name" value="PRK00982.1-4"/>
    <property type="match status" value="1"/>
</dbReference>
<dbReference type="NCBIfam" id="NF002151">
    <property type="entry name" value="PRK00982.1-5"/>
    <property type="match status" value="1"/>
</dbReference>
<dbReference type="PANTHER" id="PTHR20863">
    <property type="entry name" value="ACYL CARRIER PROTEIN"/>
    <property type="match status" value="1"/>
</dbReference>
<dbReference type="PANTHER" id="PTHR20863:SF76">
    <property type="entry name" value="CARRIER DOMAIN-CONTAINING PROTEIN"/>
    <property type="match status" value="1"/>
</dbReference>
<dbReference type="Pfam" id="PF00550">
    <property type="entry name" value="PP-binding"/>
    <property type="match status" value="1"/>
</dbReference>
<dbReference type="SUPFAM" id="SSF47336">
    <property type="entry name" value="ACP-like"/>
    <property type="match status" value="1"/>
</dbReference>
<dbReference type="PROSITE" id="PS50075">
    <property type="entry name" value="CARRIER"/>
    <property type="match status" value="1"/>
</dbReference>
<dbReference type="PROSITE" id="PS00012">
    <property type="entry name" value="PHOSPHOPANTETHEINE"/>
    <property type="match status" value="1"/>
</dbReference>
<keyword id="KW-0963">Cytoplasm</keyword>
<keyword id="KW-0275">Fatty acid biosynthesis</keyword>
<keyword id="KW-0276">Fatty acid metabolism</keyword>
<keyword id="KW-0444">Lipid biosynthesis</keyword>
<keyword id="KW-0443">Lipid metabolism</keyword>
<keyword id="KW-0596">Phosphopantetheine</keyword>
<keyword id="KW-0597">Phosphoprotein</keyword>
<keyword id="KW-1185">Reference proteome</keyword>
<proteinExistence type="evidence at transcript level"/>
<feature type="chain" id="PRO_1000066699" description="Acyl carrier protein">
    <location>
        <begin position="1"/>
        <end position="77"/>
    </location>
</feature>
<feature type="domain" description="Carrier" evidence="2">
    <location>
        <begin position="1"/>
        <end position="76"/>
    </location>
</feature>
<feature type="modified residue" description="O-(pantetheine 4'-phosphoryl)serine" evidence="2">
    <location>
        <position position="36"/>
    </location>
</feature>
<sequence>MENFDKVKDIIVDRLGVDADKVTEDASFKDDLGADSLDIAELVMELEDEFGTEIPDEEAEKINTVGDAVKFINSLEK</sequence>
<accession>Q2FZ51</accession>
<gene>
    <name evidence="1" type="primary">acpP</name>
    <name type="synonym">hmrB</name>
    <name type="ordered locus">SAOUHSC_01201</name>
</gene>
<protein>
    <recommendedName>
        <fullName evidence="1">Acyl carrier protein</fullName>
        <shortName evidence="1">ACP</shortName>
    </recommendedName>
</protein>
<name>ACP_STAA8</name>
<comment type="function">
    <text evidence="1">Carrier of the growing fatty acid chain in fatty acid biosynthesis.</text>
</comment>
<comment type="pathway">
    <text evidence="1">Lipid metabolism; fatty acid biosynthesis.</text>
</comment>
<comment type="subcellular location">
    <subcellularLocation>
        <location evidence="1">Cytoplasm</location>
    </subcellularLocation>
</comment>
<comment type="induction">
    <text evidence="3">Expression requires either cleavage of the mRNA to liberate the ribosome binding site (RBS), or rapid translation before the hairpin in its 5' regulatory region can form. RNase 3 (rnc) is probably cleaves the RBS, while RNases J1/J2 (rnj1, rnj2) are involved in mRNA degradation.</text>
</comment>
<comment type="PTM">
    <text evidence="1">4'-phosphopantetheine is transferred from CoA to a specific serine of apo-ACP by AcpS. This modification is essential for activity because fatty acids are bound in thioester linkage to the sulfhydryl of the prosthetic group.</text>
</comment>
<comment type="similarity">
    <text evidence="1">Belongs to the acyl carrier protein (ACP) family.</text>
</comment>
<reference key="1">
    <citation type="book" date="2006" name="Gram positive pathogens, 2nd edition">
        <title>The Staphylococcus aureus NCTC 8325 genome.</title>
        <editorList>
            <person name="Fischetti V."/>
            <person name="Novick R."/>
            <person name="Ferretti J."/>
            <person name="Portnoy D."/>
            <person name="Rood J."/>
        </editorList>
        <authorList>
            <person name="Gillaspy A.F."/>
            <person name="Worrell V."/>
            <person name="Orvis J."/>
            <person name="Roe B.A."/>
            <person name="Dyer D.W."/>
            <person name="Iandolo J.J."/>
        </authorList>
    </citation>
    <scope>NUCLEOTIDE SEQUENCE [LARGE SCALE GENOMIC DNA]</scope>
    <source>
        <strain>NCTC 8325 / PS 47</strain>
    </source>
</reference>
<reference key="2">
    <citation type="journal article" date="2014" name="PLoS Genet.">
        <title>Transcriptome-wide analyses of 5'-ends in RNase J mutants of a gram-positive pathogen reveal a role in RNA maturation, regulation and degradation.</title>
        <authorList>
            <person name="Linder P."/>
            <person name="Lemeille S."/>
            <person name="Redder P."/>
        </authorList>
    </citation>
    <scope>INDUCTION</scope>
    <source>
        <strain>SA564</strain>
    </source>
</reference>
<organism>
    <name type="scientific">Staphylococcus aureus (strain NCTC 8325 / PS 47)</name>
    <dbReference type="NCBI Taxonomy" id="93061"/>
    <lineage>
        <taxon>Bacteria</taxon>
        <taxon>Bacillati</taxon>
        <taxon>Bacillota</taxon>
        <taxon>Bacilli</taxon>
        <taxon>Bacillales</taxon>
        <taxon>Staphylococcaceae</taxon>
        <taxon>Staphylococcus</taxon>
    </lineage>
</organism>